<gene>
    <name evidence="1" type="primary">coaX</name>
    <name type="ordered locus">SYO3AOP1_1376</name>
</gene>
<accession>B2V5N9</accession>
<protein>
    <recommendedName>
        <fullName evidence="1">Type III pantothenate kinase</fullName>
        <ecNumber evidence="1">2.7.1.33</ecNumber>
    </recommendedName>
    <alternativeName>
        <fullName evidence="1">PanK-III</fullName>
    </alternativeName>
    <alternativeName>
        <fullName evidence="1">Pantothenic acid kinase</fullName>
    </alternativeName>
</protein>
<feature type="chain" id="PRO_1000140259" description="Type III pantothenate kinase">
    <location>
        <begin position="1"/>
        <end position="252"/>
    </location>
</feature>
<feature type="active site" description="Proton acceptor" evidence="1">
    <location>
        <position position="109"/>
    </location>
</feature>
<feature type="binding site" evidence="1">
    <location>
        <begin position="6"/>
        <end position="13"/>
    </location>
    <ligand>
        <name>ATP</name>
        <dbReference type="ChEBI" id="CHEBI:30616"/>
    </ligand>
</feature>
<feature type="binding site" evidence="1">
    <location>
        <position position="100"/>
    </location>
    <ligand>
        <name>substrate</name>
    </ligand>
</feature>
<feature type="binding site" evidence="1">
    <location>
        <begin position="107"/>
        <end position="110"/>
    </location>
    <ligand>
        <name>substrate</name>
    </ligand>
</feature>
<feature type="binding site" evidence="1">
    <location>
        <position position="129"/>
    </location>
    <ligand>
        <name>K(+)</name>
        <dbReference type="ChEBI" id="CHEBI:29103"/>
    </ligand>
</feature>
<feature type="binding site" evidence="1">
    <location>
        <position position="132"/>
    </location>
    <ligand>
        <name>ATP</name>
        <dbReference type="ChEBI" id="CHEBI:30616"/>
    </ligand>
</feature>
<feature type="binding site" evidence="1">
    <location>
        <position position="184"/>
    </location>
    <ligand>
        <name>substrate</name>
    </ligand>
</feature>
<keyword id="KW-0067">ATP-binding</keyword>
<keyword id="KW-0173">Coenzyme A biosynthesis</keyword>
<keyword id="KW-0963">Cytoplasm</keyword>
<keyword id="KW-0418">Kinase</keyword>
<keyword id="KW-0479">Metal-binding</keyword>
<keyword id="KW-0547">Nucleotide-binding</keyword>
<keyword id="KW-0630">Potassium</keyword>
<keyword id="KW-0808">Transferase</keyword>
<comment type="function">
    <text evidence="1">Catalyzes the phosphorylation of pantothenate (Pan), the first step in CoA biosynthesis.</text>
</comment>
<comment type="catalytic activity">
    <reaction evidence="1">
        <text>(R)-pantothenate + ATP = (R)-4'-phosphopantothenate + ADP + H(+)</text>
        <dbReference type="Rhea" id="RHEA:16373"/>
        <dbReference type="ChEBI" id="CHEBI:10986"/>
        <dbReference type="ChEBI" id="CHEBI:15378"/>
        <dbReference type="ChEBI" id="CHEBI:29032"/>
        <dbReference type="ChEBI" id="CHEBI:30616"/>
        <dbReference type="ChEBI" id="CHEBI:456216"/>
        <dbReference type="EC" id="2.7.1.33"/>
    </reaction>
</comment>
<comment type="cofactor">
    <cofactor evidence="1">
        <name>NH4(+)</name>
        <dbReference type="ChEBI" id="CHEBI:28938"/>
    </cofactor>
    <cofactor evidence="1">
        <name>K(+)</name>
        <dbReference type="ChEBI" id="CHEBI:29103"/>
    </cofactor>
    <text evidence="1">A monovalent cation. Ammonium or potassium.</text>
</comment>
<comment type="pathway">
    <text evidence="1">Cofactor biosynthesis; coenzyme A biosynthesis; CoA from (R)-pantothenate: step 1/5.</text>
</comment>
<comment type="subunit">
    <text evidence="1">Homodimer.</text>
</comment>
<comment type="subcellular location">
    <subcellularLocation>
        <location evidence="1">Cytoplasm</location>
    </subcellularLocation>
</comment>
<comment type="similarity">
    <text evidence="1">Belongs to the type III pantothenate kinase family.</text>
</comment>
<evidence type="ECO:0000255" key="1">
    <source>
        <dbReference type="HAMAP-Rule" id="MF_01274"/>
    </source>
</evidence>
<name>COAX_SULSY</name>
<organism>
    <name type="scientific">Sulfurihydrogenibium sp. (strain YO3AOP1)</name>
    <dbReference type="NCBI Taxonomy" id="436114"/>
    <lineage>
        <taxon>Bacteria</taxon>
        <taxon>Pseudomonadati</taxon>
        <taxon>Aquificota</taxon>
        <taxon>Aquificia</taxon>
        <taxon>Aquificales</taxon>
        <taxon>Hydrogenothermaceae</taxon>
        <taxon>Sulfurihydrogenibium</taxon>
    </lineage>
</organism>
<dbReference type="EC" id="2.7.1.33" evidence="1"/>
<dbReference type="EMBL" id="CP001080">
    <property type="protein sequence ID" value="ACD66983.1"/>
    <property type="molecule type" value="Genomic_DNA"/>
</dbReference>
<dbReference type="RefSeq" id="WP_012460041.1">
    <property type="nucleotide sequence ID" value="NC_010730.1"/>
</dbReference>
<dbReference type="SMR" id="B2V5N9"/>
<dbReference type="STRING" id="436114.SYO3AOP1_1376"/>
<dbReference type="KEGG" id="sul:SYO3AOP1_1376"/>
<dbReference type="eggNOG" id="COG1521">
    <property type="taxonomic scope" value="Bacteria"/>
</dbReference>
<dbReference type="HOGENOM" id="CLU_066627_1_0_0"/>
<dbReference type="UniPathway" id="UPA00241">
    <property type="reaction ID" value="UER00352"/>
</dbReference>
<dbReference type="GO" id="GO:0005737">
    <property type="term" value="C:cytoplasm"/>
    <property type="evidence" value="ECO:0007669"/>
    <property type="project" value="UniProtKB-SubCell"/>
</dbReference>
<dbReference type="GO" id="GO:0005524">
    <property type="term" value="F:ATP binding"/>
    <property type="evidence" value="ECO:0007669"/>
    <property type="project" value="UniProtKB-UniRule"/>
</dbReference>
<dbReference type="GO" id="GO:0046872">
    <property type="term" value="F:metal ion binding"/>
    <property type="evidence" value="ECO:0007669"/>
    <property type="project" value="UniProtKB-KW"/>
</dbReference>
<dbReference type="GO" id="GO:0004594">
    <property type="term" value="F:pantothenate kinase activity"/>
    <property type="evidence" value="ECO:0007669"/>
    <property type="project" value="UniProtKB-UniRule"/>
</dbReference>
<dbReference type="GO" id="GO:0015937">
    <property type="term" value="P:coenzyme A biosynthetic process"/>
    <property type="evidence" value="ECO:0007669"/>
    <property type="project" value="UniProtKB-UniRule"/>
</dbReference>
<dbReference type="CDD" id="cd24015">
    <property type="entry name" value="ASKHA_NBD_PanK-III"/>
    <property type="match status" value="1"/>
</dbReference>
<dbReference type="Gene3D" id="3.30.420.40">
    <property type="match status" value="2"/>
</dbReference>
<dbReference type="HAMAP" id="MF_01274">
    <property type="entry name" value="Pantothen_kinase_3"/>
    <property type="match status" value="1"/>
</dbReference>
<dbReference type="InterPro" id="IPR043129">
    <property type="entry name" value="ATPase_NBD"/>
</dbReference>
<dbReference type="InterPro" id="IPR004619">
    <property type="entry name" value="Type_III_PanK"/>
</dbReference>
<dbReference type="NCBIfam" id="TIGR00671">
    <property type="entry name" value="baf"/>
    <property type="match status" value="1"/>
</dbReference>
<dbReference type="NCBIfam" id="NF009848">
    <property type="entry name" value="PRK13318.1-6"/>
    <property type="match status" value="1"/>
</dbReference>
<dbReference type="NCBIfam" id="NF009855">
    <property type="entry name" value="PRK13321.1"/>
    <property type="match status" value="1"/>
</dbReference>
<dbReference type="PANTHER" id="PTHR34265">
    <property type="entry name" value="TYPE III PANTOTHENATE KINASE"/>
    <property type="match status" value="1"/>
</dbReference>
<dbReference type="PANTHER" id="PTHR34265:SF1">
    <property type="entry name" value="TYPE III PANTOTHENATE KINASE"/>
    <property type="match status" value="1"/>
</dbReference>
<dbReference type="Pfam" id="PF03309">
    <property type="entry name" value="Pan_kinase"/>
    <property type="match status" value="1"/>
</dbReference>
<dbReference type="SUPFAM" id="SSF53067">
    <property type="entry name" value="Actin-like ATPase domain"/>
    <property type="match status" value="2"/>
</dbReference>
<reference key="1">
    <citation type="journal article" date="2009" name="J. Bacteriol.">
        <title>Complete and draft genome sequences of six members of the Aquificales.</title>
        <authorList>
            <person name="Reysenbach A.-L."/>
            <person name="Hamamura N."/>
            <person name="Podar M."/>
            <person name="Griffiths E."/>
            <person name="Ferreira S."/>
            <person name="Hochstein R."/>
            <person name="Heidelberg J."/>
            <person name="Johnson J."/>
            <person name="Mead D."/>
            <person name="Pohorille A."/>
            <person name="Sarmiento M."/>
            <person name="Schweighofer K."/>
            <person name="Seshadri R."/>
            <person name="Voytek M.A."/>
        </authorList>
    </citation>
    <scope>NUCLEOTIDE SEQUENCE [LARGE SCALE GENOMIC DNA]</scope>
    <source>
        <strain>YO3AOP1</strain>
    </source>
</reference>
<sequence>MILAVDIGNTTTEIGYIKDLDKIETLKFKTDHGKTIDDWLINFSFFLNFYNLDETNINKIYISSVVPQVEEKITKALEKLLNVNPLLIGTDVKVPLKINYENPSEVGADRILNAFASINILNPPLIAIDFGTAVTFDVVNKNSEYDGGLIFPGLESSVNCLFSKTAKLPKVKIEKPSNIVGKNTISSIQSGIYNGYISLVEGVISKIEDEYKCKFNIILTGGHGKIISESLNLQHVFEQYLPIKGIYFLDKY</sequence>
<proteinExistence type="inferred from homology"/>